<evidence type="ECO:0000255" key="1">
    <source>
        <dbReference type="HAMAP-Rule" id="MF_01454"/>
    </source>
</evidence>
<evidence type="ECO:0000255" key="2">
    <source>
        <dbReference type="PROSITE-ProRule" id="PRU01231"/>
    </source>
</evidence>
<evidence type="ECO:0000256" key="3">
    <source>
        <dbReference type="SAM" id="MobiDB-lite"/>
    </source>
</evidence>
<organism>
    <name type="scientific">Parabacteroides distasonis (strain ATCC 8503 / DSM 20701 / CIP 104284 / JCM 5825 / NCTC 11152)</name>
    <dbReference type="NCBI Taxonomy" id="435591"/>
    <lineage>
        <taxon>Bacteria</taxon>
        <taxon>Pseudomonadati</taxon>
        <taxon>Bacteroidota</taxon>
        <taxon>Bacteroidia</taxon>
        <taxon>Bacteroidales</taxon>
        <taxon>Tannerellaceae</taxon>
        <taxon>Parabacteroides</taxon>
    </lineage>
</organism>
<protein>
    <recommendedName>
        <fullName evidence="1">GTPase Obg</fullName>
        <ecNumber evidence="1">3.6.5.-</ecNumber>
    </recommendedName>
    <alternativeName>
        <fullName evidence="1">GTP-binding protein Obg</fullName>
    </alternativeName>
</protein>
<proteinExistence type="inferred from homology"/>
<feature type="chain" id="PRO_0000386107" description="GTPase Obg">
    <location>
        <begin position="1"/>
        <end position="386"/>
    </location>
</feature>
<feature type="domain" description="Obg" evidence="2">
    <location>
        <begin position="4"/>
        <end position="162"/>
    </location>
</feature>
<feature type="domain" description="OBG-type G" evidence="1">
    <location>
        <begin position="163"/>
        <end position="329"/>
    </location>
</feature>
<feature type="region of interest" description="Disordered" evidence="3">
    <location>
        <begin position="18"/>
        <end position="44"/>
    </location>
</feature>
<feature type="region of interest" description="Disordered" evidence="3">
    <location>
        <begin position="357"/>
        <end position="386"/>
    </location>
</feature>
<feature type="binding site" evidence="1">
    <location>
        <begin position="169"/>
        <end position="176"/>
    </location>
    <ligand>
        <name>GTP</name>
        <dbReference type="ChEBI" id="CHEBI:37565"/>
    </ligand>
</feature>
<feature type="binding site" evidence="1">
    <location>
        <position position="176"/>
    </location>
    <ligand>
        <name>Mg(2+)</name>
        <dbReference type="ChEBI" id="CHEBI:18420"/>
    </ligand>
</feature>
<feature type="binding site" evidence="1">
    <location>
        <begin position="194"/>
        <end position="198"/>
    </location>
    <ligand>
        <name>GTP</name>
        <dbReference type="ChEBI" id="CHEBI:37565"/>
    </ligand>
</feature>
<feature type="binding site" evidence="1">
    <location>
        <position position="196"/>
    </location>
    <ligand>
        <name>Mg(2+)</name>
        <dbReference type="ChEBI" id="CHEBI:18420"/>
    </ligand>
</feature>
<feature type="binding site" evidence="1">
    <location>
        <begin position="216"/>
        <end position="219"/>
    </location>
    <ligand>
        <name>GTP</name>
        <dbReference type="ChEBI" id="CHEBI:37565"/>
    </ligand>
</feature>
<feature type="binding site" evidence="1">
    <location>
        <begin position="283"/>
        <end position="286"/>
    </location>
    <ligand>
        <name>GTP</name>
        <dbReference type="ChEBI" id="CHEBI:37565"/>
    </ligand>
</feature>
<feature type="binding site" evidence="1">
    <location>
        <begin position="310"/>
        <end position="312"/>
    </location>
    <ligand>
        <name>GTP</name>
        <dbReference type="ChEBI" id="CHEBI:37565"/>
    </ligand>
</feature>
<sequence length="386" mass="43307">MAESNFVDYVKIYCRSGKGGRGSSHFRREKYIPKGGPDGGDGGRGGHVYLRGNRNYWTLLHLKYERHIMATNGESGSAKRSSGKDGEDRVIEVPCGTVVYDAETGEFICDVTEDGQQVMLLKGGRGGLGNFNFKTATNQAPRYSQPGEPALERTVILQLKLLADVGLVGFPNAGKSTLLSVVSAAKPKIANYPFTTLEPNLGIVSYRDNRSFVMADIPGIIEGASEGKGLGLRFLRHIERNSLLLFMVPAEADDIKKEYEILHNELVKYNPELLDKRRVLAITKSDMLDEELIEALSQDLPEGIPYVFISSITGLGIVELKDLLWKELNKENFHEAERIVHKNIDVSTLEFEDDDEYIFPVDEDEDDPDEEYEEYWDDDEDEDTRK</sequence>
<name>OBG_PARD8</name>
<gene>
    <name evidence="1" type="primary">obg</name>
    <name type="ordered locus">BDI_1897</name>
</gene>
<keyword id="KW-0963">Cytoplasm</keyword>
<keyword id="KW-0342">GTP-binding</keyword>
<keyword id="KW-0378">Hydrolase</keyword>
<keyword id="KW-0460">Magnesium</keyword>
<keyword id="KW-0479">Metal-binding</keyword>
<keyword id="KW-0547">Nucleotide-binding</keyword>
<keyword id="KW-1185">Reference proteome</keyword>
<comment type="function">
    <text evidence="1">An essential GTPase which binds GTP, GDP and possibly (p)ppGpp with moderate affinity, with high nucleotide exchange rates and a fairly low GTP hydrolysis rate. Plays a role in control of the cell cycle, stress response, ribosome biogenesis and in those bacteria that undergo differentiation, in morphogenesis control.</text>
</comment>
<comment type="cofactor">
    <cofactor evidence="1">
        <name>Mg(2+)</name>
        <dbReference type="ChEBI" id="CHEBI:18420"/>
    </cofactor>
</comment>
<comment type="subunit">
    <text evidence="1">Monomer.</text>
</comment>
<comment type="subcellular location">
    <subcellularLocation>
        <location evidence="1">Cytoplasm</location>
    </subcellularLocation>
</comment>
<comment type="similarity">
    <text evidence="1">Belongs to the TRAFAC class OBG-HflX-like GTPase superfamily. OBG GTPase family.</text>
</comment>
<reference key="1">
    <citation type="journal article" date="2007" name="PLoS Biol.">
        <title>Evolution of symbiotic bacteria in the distal human intestine.</title>
        <authorList>
            <person name="Xu J."/>
            <person name="Mahowald M.A."/>
            <person name="Ley R.E."/>
            <person name="Lozupone C.A."/>
            <person name="Hamady M."/>
            <person name="Martens E.C."/>
            <person name="Henrissat B."/>
            <person name="Coutinho P.M."/>
            <person name="Minx P."/>
            <person name="Latreille P."/>
            <person name="Cordum H."/>
            <person name="Van Brunt A."/>
            <person name="Kim K."/>
            <person name="Fulton R.S."/>
            <person name="Fulton L.A."/>
            <person name="Clifton S.W."/>
            <person name="Wilson R.K."/>
            <person name="Knight R.D."/>
            <person name="Gordon J.I."/>
        </authorList>
    </citation>
    <scope>NUCLEOTIDE SEQUENCE [LARGE SCALE GENOMIC DNA]</scope>
    <source>
        <strain>ATCC 8503 / DSM 20701 / CIP 104284 / JCM 5825 / NCTC 11152</strain>
    </source>
</reference>
<dbReference type="EC" id="3.6.5.-" evidence="1"/>
<dbReference type="EMBL" id="CP000140">
    <property type="protein sequence ID" value="ABR43632.1"/>
    <property type="molecule type" value="Genomic_DNA"/>
</dbReference>
<dbReference type="SMR" id="A6LD68"/>
<dbReference type="STRING" id="435591.BDI_1897"/>
<dbReference type="PaxDb" id="435591-BDI_1897"/>
<dbReference type="KEGG" id="pdi:BDI_1897"/>
<dbReference type="eggNOG" id="COG0536">
    <property type="taxonomic scope" value="Bacteria"/>
</dbReference>
<dbReference type="HOGENOM" id="CLU_011747_2_0_10"/>
<dbReference type="BioCyc" id="PDIS435591:G1G5A-1950-MONOMER"/>
<dbReference type="Proteomes" id="UP000000566">
    <property type="component" value="Chromosome"/>
</dbReference>
<dbReference type="GO" id="GO:0005737">
    <property type="term" value="C:cytoplasm"/>
    <property type="evidence" value="ECO:0007669"/>
    <property type="project" value="UniProtKB-SubCell"/>
</dbReference>
<dbReference type="GO" id="GO:0005525">
    <property type="term" value="F:GTP binding"/>
    <property type="evidence" value="ECO:0007669"/>
    <property type="project" value="UniProtKB-UniRule"/>
</dbReference>
<dbReference type="GO" id="GO:0003924">
    <property type="term" value="F:GTPase activity"/>
    <property type="evidence" value="ECO:0007669"/>
    <property type="project" value="UniProtKB-UniRule"/>
</dbReference>
<dbReference type="GO" id="GO:0000287">
    <property type="term" value="F:magnesium ion binding"/>
    <property type="evidence" value="ECO:0007669"/>
    <property type="project" value="InterPro"/>
</dbReference>
<dbReference type="GO" id="GO:0042254">
    <property type="term" value="P:ribosome biogenesis"/>
    <property type="evidence" value="ECO:0007669"/>
    <property type="project" value="UniProtKB-UniRule"/>
</dbReference>
<dbReference type="CDD" id="cd01898">
    <property type="entry name" value="Obg"/>
    <property type="match status" value="1"/>
</dbReference>
<dbReference type="FunFam" id="2.70.210.12:FF:000001">
    <property type="entry name" value="GTPase Obg"/>
    <property type="match status" value="1"/>
</dbReference>
<dbReference type="Gene3D" id="2.70.210.12">
    <property type="entry name" value="GTP1/OBG domain"/>
    <property type="match status" value="1"/>
</dbReference>
<dbReference type="Gene3D" id="3.40.50.300">
    <property type="entry name" value="P-loop containing nucleotide triphosphate hydrolases"/>
    <property type="match status" value="1"/>
</dbReference>
<dbReference type="HAMAP" id="MF_01454">
    <property type="entry name" value="GTPase_Obg"/>
    <property type="match status" value="1"/>
</dbReference>
<dbReference type="InterPro" id="IPR031167">
    <property type="entry name" value="G_OBG"/>
</dbReference>
<dbReference type="InterPro" id="IPR006073">
    <property type="entry name" value="GTP-bd"/>
</dbReference>
<dbReference type="InterPro" id="IPR014100">
    <property type="entry name" value="GTP-bd_Obg/CgtA"/>
</dbReference>
<dbReference type="InterPro" id="IPR006074">
    <property type="entry name" value="GTP1-OBG_CS"/>
</dbReference>
<dbReference type="InterPro" id="IPR006169">
    <property type="entry name" value="GTP1_OBG_dom"/>
</dbReference>
<dbReference type="InterPro" id="IPR036726">
    <property type="entry name" value="GTP1_OBG_dom_sf"/>
</dbReference>
<dbReference type="InterPro" id="IPR045086">
    <property type="entry name" value="OBG_GTPase"/>
</dbReference>
<dbReference type="InterPro" id="IPR027417">
    <property type="entry name" value="P-loop_NTPase"/>
</dbReference>
<dbReference type="NCBIfam" id="TIGR02729">
    <property type="entry name" value="Obg_CgtA"/>
    <property type="match status" value="1"/>
</dbReference>
<dbReference type="NCBIfam" id="NF008955">
    <property type="entry name" value="PRK12297.1"/>
    <property type="match status" value="1"/>
</dbReference>
<dbReference type="NCBIfam" id="NF008956">
    <property type="entry name" value="PRK12299.1"/>
    <property type="match status" value="1"/>
</dbReference>
<dbReference type="PANTHER" id="PTHR11702">
    <property type="entry name" value="DEVELOPMENTALLY REGULATED GTP-BINDING PROTEIN-RELATED"/>
    <property type="match status" value="1"/>
</dbReference>
<dbReference type="PANTHER" id="PTHR11702:SF31">
    <property type="entry name" value="MITOCHONDRIAL RIBOSOME-ASSOCIATED GTPASE 2"/>
    <property type="match status" value="1"/>
</dbReference>
<dbReference type="Pfam" id="PF01018">
    <property type="entry name" value="GTP1_OBG"/>
    <property type="match status" value="1"/>
</dbReference>
<dbReference type="Pfam" id="PF01926">
    <property type="entry name" value="MMR_HSR1"/>
    <property type="match status" value="1"/>
</dbReference>
<dbReference type="PIRSF" id="PIRSF002401">
    <property type="entry name" value="GTP_bd_Obg/CgtA"/>
    <property type="match status" value="1"/>
</dbReference>
<dbReference type="PRINTS" id="PR00326">
    <property type="entry name" value="GTP1OBG"/>
</dbReference>
<dbReference type="SUPFAM" id="SSF82051">
    <property type="entry name" value="Obg GTP-binding protein N-terminal domain"/>
    <property type="match status" value="1"/>
</dbReference>
<dbReference type="SUPFAM" id="SSF52540">
    <property type="entry name" value="P-loop containing nucleoside triphosphate hydrolases"/>
    <property type="match status" value="1"/>
</dbReference>
<dbReference type="PROSITE" id="PS51710">
    <property type="entry name" value="G_OBG"/>
    <property type="match status" value="1"/>
</dbReference>
<dbReference type="PROSITE" id="PS00905">
    <property type="entry name" value="GTP1_OBG"/>
    <property type="match status" value="1"/>
</dbReference>
<dbReference type="PROSITE" id="PS51883">
    <property type="entry name" value="OBG"/>
    <property type="match status" value="1"/>
</dbReference>
<accession>A6LD68</accession>